<evidence type="ECO:0000250" key="1"/>
<evidence type="ECO:0000305" key="2"/>
<comment type="function">
    <text evidence="1">Responsible for glycerol-3-phosphate uptake.</text>
</comment>
<comment type="subcellular location">
    <subcellularLocation>
        <location evidence="1">Cell inner membrane</location>
        <topology evidence="1">Multi-pass membrane protein</topology>
    </subcellularLocation>
</comment>
<comment type="similarity">
    <text evidence="2">Belongs to the major facilitator superfamily. Organophosphate:Pi antiporter (OPA) (TC 2.A.1.4) family.</text>
</comment>
<protein>
    <recommendedName>
        <fullName>Glycerol-3-phosphate transporter</fullName>
        <shortName>G-3-P transporter</shortName>
    </recommendedName>
    <alternativeName>
        <fullName>G-3-P permease</fullName>
    </alternativeName>
</protein>
<feature type="chain" id="PRO_0000199879" description="Glycerol-3-phosphate transporter">
    <location>
        <begin position="1"/>
        <end position="480"/>
    </location>
</feature>
<feature type="topological domain" description="Cytoplasmic" evidence="1">
    <location>
        <begin position="1"/>
        <end position="36"/>
    </location>
</feature>
<feature type="transmembrane region" description="Helical; Name=1" evidence="1">
    <location>
        <begin position="37"/>
        <end position="57"/>
    </location>
</feature>
<feature type="topological domain" description="Periplasmic" evidence="1">
    <location>
        <begin position="58"/>
        <end position="64"/>
    </location>
</feature>
<feature type="transmembrane region" description="Helical; Name=2" evidence="1">
    <location>
        <begin position="65"/>
        <end position="85"/>
    </location>
</feature>
<feature type="topological domain" description="Cytoplasmic" evidence="1">
    <location>
        <begin position="86"/>
        <end position="94"/>
    </location>
</feature>
<feature type="transmembrane region" description="Helical; Name=3" evidence="1">
    <location>
        <begin position="95"/>
        <end position="113"/>
    </location>
</feature>
<feature type="topological domain" description="Periplasmic" evidence="1">
    <location>
        <begin position="114"/>
        <end position="121"/>
    </location>
</feature>
<feature type="transmembrane region" description="Helical; Name=4" evidence="1">
    <location>
        <begin position="122"/>
        <end position="142"/>
    </location>
</feature>
<feature type="topological domain" description="Cytoplasmic" evidence="1">
    <location>
        <begin position="143"/>
        <end position="161"/>
    </location>
</feature>
<feature type="transmembrane region" description="Helical; Name=5" evidence="1">
    <location>
        <begin position="162"/>
        <end position="181"/>
    </location>
</feature>
<feature type="topological domain" description="Periplasmic" evidence="1">
    <location>
        <begin position="182"/>
        <end position="201"/>
    </location>
</feature>
<feature type="transmembrane region" description="Helical; Name=6" evidence="1">
    <location>
        <begin position="202"/>
        <end position="219"/>
    </location>
</feature>
<feature type="topological domain" description="Cytoplasmic" evidence="1">
    <location>
        <begin position="220"/>
        <end position="274"/>
    </location>
</feature>
<feature type="transmembrane region" description="Helical; Name=7" evidence="1">
    <location>
        <begin position="275"/>
        <end position="295"/>
    </location>
</feature>
<feature type="topological domain" description="Periplasmic" evidence="1">
    <location>
        <begin position="296"/>
        <end position="300"/>
    </location>
</feature>
<feature type="transmembrane region" description="Helical; Name=8" evidence="1">
    <location>
        <begin position="301"/>
        <end position="321"/>
    </location>
</feature>
<feature type="topological domain" description="Cytoplasmic" evidence="1">
    <location>
        <begin position="322"/>
        <end position="334"/>
    </location>
</feature>
<feature type="transmembrane region" description="Helical; Name=9" evidence="1">
    <location>
        <begin position="335"/>
        <end position="354"/>
    </location>
</feature>
<feature type="topological domain" description="Periplasmic" evidence="1">
    <location>
        <begin position="355"/>
        <end position="359"/>
    </location>
</feature>
<feature type="transmembrane region" description="Helical; Name=10" evidence="1">
    <location>
        <begin position="360"/>
        <end position="396"/>
    </location>
</feature>
<feature type="topological domain" description="Cytoplasmic" evidence="1">
    <location>
        <begin position="397"/>
        <end position="415"/>
    </location>
</feature>
<feature type="transmembrane region" description="Helical; Name=11" evidence="1">
    <location>
        <begin position="416"/>
        <end position="437"/>
    </location>
</feature>
<feature type="topological domain" description="Periplasmic" evidence="1">
    <location>
        <begin position="438"/>
        <end position="442"/>
    </location>
</feature>
<feature type="transmembrane region" description="Helical; Name=12" evidence="1">
    <location>
        <begin position="443"/>
        <end position="463"/>
    </location>
</feature>
<feature type="topological domain" description="Cytoplasmic" evidence="1">
    <location>
        <begin position="464"/>
        <end position="479"/>
    </location>
</feature>
<keyword id="KW-0997">Cell inner membrane</keyword>
<keyword id="KW-1003">Cell membrane</keyword>
<keyword id="KW-0319">Glycerol metabolism</keyword>
<keyword id="KW-0472">Membrane</keyword>
<keyword id="KW-1185">Reference proteome</keyword>
<keyword id="KW-0812">Transmembrane</keyword>
<keyword id="KW-1133">Transmembrane helix</keyword>
<keyword id="KW-0813">Transport</keyword>
<sequence>MFGPFKPAPHIAELPAEKIDSTYKRLRWQVFAGIFFGYAAYYFVRANFDLAQPGLIQAGLYSKAELGVIGSAAGLAYGLSKFVMAGMSDRSNPRVFLPFGLLLSGLCMTLMGLFPWATSGIAIMWVMIFLNGWFQGMGWPPCGRTMVHWWSKSERGTIVSIWNTAHNIGGMVPGAMVLLASAIFFSTHGIEAQAKDVWQQSLYFPGIAAMIFAIPVYFVMRDTPQSCGLPSIEKWRNDYPDDYNEKTYENDLTAKEIFVTYVLKNKLLWYIAIANVFVYLIRYGVLKWSPVYLSEVKHFNIKGTAWAYTIYELAAVPGTLLCGWVSDKVFKGKRGLTGFIFMILTTAAVVAYWMNPATPEAELANYSAWYENPYQLTDFVLMTLIGFLIYGPVMLIGLHALELAPKKAAGTAAGFTGLFGYLGGTVSASAVIGWAAQHYGWDGGFYVMIGGGVLAVLLLLIVMVEEGKHKAKLGDTYGTK</sequence>
<organism>
    <name type="scientific">Haemophilus influenzae (strain ATCC 51907 / DSM 11121 / KW20 / Rd)</name>
    <dbReference type="NCBI Taxonomy" id="71421"/>
    <lineage>
        <taxon>Bacteria</taxon>
        <taxon>Pseudomonadati</taxon>
        <taxon>Pseudomonadota</taxon>
        <taxon>Gammaproteobacteria</taxon>
        <taxon>Pasteurellales</taxon>
        <taxon>Pasteurellaceae</taxon>
        <taxon>Haemophilus</taxon>
    </lineage>
</organism>
<reference key="1">
    <citation type="journal article" date="1995" name="Science">
        <title>Whole-genome random sequencing and assembly of Haemophilus influenzae Rd.</title>
        <authorList>
            <person name="Fleischmann R.D."/>
            <person name="Adams M.D."/>
            <person name="White O."/>
            <person name="Clayton R.A."/>
            <person name="Kirkness E.F."/>
            <person name="Kerlavage A.R."/>
            <person name="Bult C.J."/>
            <person name="Tomb J.-F."/>
            <person name="Dougherty B.A."/>
            <person name="Merrick J.M."/>
            <person name="McKenney K."/>
            <person name="Sutton G.G."/>
            <person name="FitzHugh W."/>
            <person name="Fields C.A."/>
            <person name="Gocayne J.D."/>
            <person name="Scott J.D."/>
            <person name="Shirley R."/>
            <person name="Liu L.-I."/>
            <person name="Glodek A."/>
            <person name="Kelley J.M."/>
            <person name="Weidman J.F."/>
            <person name="Phillips C.A."/>
            <person name="Spriggs T."/>
            <person name="Hedblom E."/>
            <person name="Cotton M.D."/>
            <person name="Utterback T.R."/>
            <person name="Hanna M.C."/>
            <person name="Nguyen D.T."/>
            <person name="Saudek D.M."/>
            <person name="Brandon R.C."/>
            <person name="Fine L.D."/>
            <person name="Fritchman J.L."/>
            <person name="Fuhrmann J.L."/>
            <person name="Geoghagen N.S.M."/>
            <person name="Gnehm C.L."/>
            <person name="McDonald L.A."/>
            <person name="Small K.V."/>
            <person name="Fraser C.M."/>
            <person name="Smith H.O."/>
            <person name="Venter J.C."/>
        </authorList>
    </citation>
    <scope>NUCLEOTIDE SEQUENCE [LARGE SCALE GENOMIC DNA]</scope>
    <source>
        <strain>ATCC 51907 / DSM 11121 / KW20 / Rd</strain>
    </source>
</reference>
<reference key="2">
    <citation type="submission" date="1998-05" db="EMBL/GenBank/DDBJ databases">
        <authorList>
            <person name="White O."/>
            <person name="Clayton R.A."/>
            <person name="Kerlavage A.R."/>
            <person name="Fleischmann R.D."/>
            <person name="Peterson J."/>
            <person name="Hickey E."/>
            <person name="Dodson R."/>
            <person name="Gwinn M."/>
        </authorList>
    </citation>
    <scope>SEQUENCE REVISION</scope>
</reference>
<reference key="3">
    <citation type="journal article" date="1998" name="Gene">
        <title>Glycerol-3-phosphate transport in Haemophilus influenzae: cloning, sequencing, and transcription analysis of the glpT gene.</title>
        <authorList>
            <person name="Song X.M."/>
            <person name="Forsgren A."/>
            <person name="Janson H."/>
        </authorList>
    </citation>
    <scope>NUCLEOTIDE SEQUENCE [GENOMIC DNA]</scope>
    <source>
        <strain>Eagan / Serotype B</strain>
    </source>
</reference>
<reference key="4">
    <citation type="submission" date="1999-03" db="EMBL/GenBank/DDBJ databases">
        <title>Different organization and regulation of the glpTQ operons between type b and nontypeable Haemophilus influenzae.</title>
        <authorList>
            <person name="Song X.M."/>
            <person name="Janson H."/>
        </authorList>
    </citation>
    <scope>NUCLEOTIDE SEQUENCE [GENOMIC DNA]</scope>
    <source>
        <strain>NTHi 772</strain>
    </source>
</reference>
<name>GLPT_HAEIN</name>
<gene>
    <name type="primary">glpT</name>
    <name type="ordered locus">HI_0686</name>
</gene>
<accession>P96335</accession>
<proteinExistence type="inferred from homology"/>
<dbReference type="EMBL" id="L42023">
    <property type="protein sequence ID" value="AAC22346.1"/>
    <property type="molecule type" value="Genomic_DNA"/>
</dbReference>
<dbReference type="EMBL" id="AF001172">
    <property type="protein sequence ID" value="AAC35741.1"/>
    <property type="molecule type" value="Genomic_DNA"/>
</dbReference>
<dbReference type="EMBL" id="AF132901">
    <property type="protein sequence ID" value="AAD38343.1"/>
    <property type="molecule type" value="Genomic_DNA"/>
</dbReference>
<dbReference type="RefSeq" id="NP_438846.1">
    <property type="nucleotide sequence ID" value="NC_000907.1"/>
</dbReference>
<dbReference type="SMR" id="P96335"/>
<dbReference type="STRING" id="71421.HI_0686"/>
<dbReference type="EnsemblBacteria" id="AAC22346">
    <property type="protein sequence ID" value="AAC22346"/>
    <property type="gene ID" value="HI_0686"/>
</dbReference>
<dbReference type="KEGG" id="hin:HI_0686"/>
<dbReference type="PATRIC" id="fig|71421.8.peg.717"/>
<dbReference type="eggNOG" id="COG2271">
    <property type="taxonomic scope" value="Bacteria"/>
</dbReference>
<dbReference type="HOGENOM" id="CLU_001265_31_0_6"/>
<dbReference type="OrthoDB" id="9766638at2"/>
<dbReference type="PhylomeDB" id="P96335"/>
<dbReference type="BioCyc" id="HINF71421:G1GJ1-721-MONOMER"/>
<dbReference type="Proteomes" id="UP000000579">
    <property type="component" value="Chromosome"/>
</dbReference>
<dbReference type="GO" id="GO:0005886">
    <property type="term" value="C:plasma membrane"/>
    <property type="evidence" value="ECO:0000318"/>
    <property type="project" value="GO_Central"/>
</dbReference>
<dbReference type="GO" id="GO:0061513">
    <property type="term" value="F:glucose 6-phosphate:phosphate antiporter activity"/>
    <property type="evidence" value="ECO:0000318"/>
    <property type="project" value="GO_Central"/>
</dbReference>
<dbReference type="GO" id="GO:0015169">
    <property type="term" value="F:glycerol-3-phosphate transmembrane transporter activity"/>
    <property type="evidence" value="ECO:0007669"/>
    <property type="project" value="InterPro"/>
</dbReference>
<dbReference type="GO" id="GO:0015760">
    <property type="term" value="P:glucose-6-phosphate transport"/>
    <property type="evidence" value="ECO:0000318"/>
    <property type="project" value="GO_Central"/>
</dbReference>
<dbReference type="GO" id="GO:0006071">
    <property type="term" value="P:glycerol metabolic process"/>
    <property type="evidence" value="ECO:0007669"/>
    <property type="project" value="UniProtKB-KW"/>
</dbReference>
<dbReference type="GO" id="GO:0035435">
    <property type="term" value="P:phosphate ion transmembrane transport"/>
    <property type="evidence" value="ECO:0000318"/>
    <property type="project" value="GO_Central"/>
</dbReference>
<dbReference type="CDD" id="cd17345">
    <property type="entry name" value="MFS_GlpT"/>
    <property type="match status" value="1"/>
</dbReference>
<dbReference type="FunFam" id="1.20.1250.20:FF:000007">
    <property type="entry name" value="Glycerol-3-phosphate transporter"/>
    <property type="match status" value="1"/>
</dbReference>
<dbReference type="Gene3D" id="1.20.1250.20">
    <property type="entry name" value="MFS general substrate transporter like domains"/>
    <property type="match status" value="2"/>
</dbReference>
<dbReference type="InterPro" id="IPR005267">
    <property type="entry name" value="G3P_transporter"/>
</dbReference>
<dbReference type="InterPro" id="IPR011701">
    <property type="entry name" value="MFS"/>
</dbReference>
<dbReference type="InterPro" id="IPR020846">
    <property type="entry name" value="MFS_dom"/>
</dbReference>
<dbReference type="InterPro" id="IPR036259">
    <property type="entry name" value="MFS_trans_sf"/>
</dbReference>
<dbReference type="InterPro" id="IPR051337">
    <property type="entry name" value="OPA_Antiporter"/>
</dbReference>
<dbReference type="InterPro" id="IPR021159">
    <property type="entry name" value="Sugar-P_transporter_CS"/>
</dbReference>
<dbReference type="InterPro" id="IPR000849">
    <property type="entry name" value="Sugar_P_transporter"/>
</dbReference>
<dbReference type="NCBIfam" id="TIGR00881">
    <property type="entry name" value="2A0104"/>
    <property type="match status" value="1"/>
</dbReference>
<dbReference type="NCBIfam" id="TIGR00712">
    <property type="entry name" value="glpT"/>
    <property type="match status" value="1"/>
</dbReference>
<dbReference type="PANTHER" id="PTHR43826">
    <property type="entry name" value="GLUCOSE-6-PHOSPHATE EXCHANGER SLC37A4"/>
    <property type="match status" value="1"/>
</dbReference>
<dbReference type="PANTHER" id="PTHR43826:SF6">
    <property type="entry name" value="GLYCEROL-3-PHOSPHATE TRANSPORTER"/>
    <property type="match status" value="1"/>
</dbReference>
<dbReference type="Pfam" id="PF07690">
    <property type="entry name" value="MFS_1"/>
    <property type="match status" value="1"/>
</dbReference>
<dbReference type="PIRSF" id="PIRSF002808">
    <property type="entry name" value="Hexose_phosphate_transp"/>
    <property type="match status" value="1"/>
</dbReference>
<dbReference type="SUPFAM" id="SSF103473">
    <property type="entry name" value="MFS general substrate transporter"/>
    <property type="match status" value="1"/>
</dbReference>
<dbReference type="PROSITE" id="PS00942">
    <property type="entry name" value="GLPT"/>
    <property type="match status" value="1"/>
</dbReference>
<dbReference type="PROSITE" id="PS50850">
    <property type="entry name" value="MFS"/>
    <property type="match status" value="1"/>
</dbReference>